<proteinExistence type="predicted"/>
<name>YVAL_VACCC</name>
<gene>
    <name type="ORF">A ORF L</name>
</gene>
<accession>P68624</accession>
<accession>P20521</accession>
<organism>
    <name type="scientific">Vaccinia virus (strain Copenhagen)</name>
    <name type="common">VACV</name>
    <dbReference type="NCBI Taxonomy" id="10249"/>
    <lineage>
        <taxon>Viruses</taxon>
        <taxon>Varidnaviria</taxon>
        <taxon>Bamfordvirae</taxon>
        <taxon>Nucleocytoviricota</taxon>
        <taxon>Pokkesviricetes</taxon>
        <taxon>Chitovirales</taxon>
        <taxon>Poxviridae</taxon>
        <taxon>Chordopoxvirinae</taxon>
        <taxon>Orthopoxvirus</taxon>
        <taxon>Vaccinia virus</taxon>
    </lineage>
</organism>
<protein>
    <recommendedName>
        <fullName>Uncharacterized 9.9 kDa protein</fullName>
    </recommendedName>
</protein>
<feature type="chain" id="PRO_0000099653" description="Uncharacterized 9.9 kDa protein">
    <location>
        <begin position="1"/>
        <end position="88"/>
    </location>
</feature>
<keyword id="KW-1185">Reference proteome</keyword>
<reference key="1">
    <citation type="journal article" date="1990" name="Virology">
        <title>The complete DNA sequence of vaccinia virus.</title>
        <authorList>
            <person name="Goebel S.J."/>
            <person name="Johnson G.P."/>
            <person name="Perkus M.E."/>
            <person name="Davis S.W."/>
            <person name="Winslow J.P."/>
            <person name="Paoletti E."/>
        </authorList>
    </citation>
    <scope>NUCLEOTIDE SEQUENCE [LARGE SCALE GENOMIC DNA]</scope>
</reference>
<reference key="2">
    <citation type="journal article" date="1990" name="Virology">
        <title>Appendix to 'The complete DNA sequence of vaccinia virus'.</title>
        <authorList>
            <person name="Goebel S.J."/>
            <person name="Johnson G.P."/>
            <person name="Perkus M.E."/>
            <person name="Davis S.W."/>
            <person name="Winslow J.P."/>
            <person name="Paoletti E."/>
        </authorList>
    </citation>
    <scope>COMPLETE GENOME</scope>
</reference>
<dbReference type="EMBL" id="M35027">
    <property type="protein sequence ID" value="AAA48159.1"/>
    <property type="molecule type" value="Genomic_DNA"/>
</dbReference>
<dbReference type="PIR" id="H42524">
    <property type="entry name" value="H42524"/>
</dbReference>
<dbReference type="Proteomes" id="UP000008269">
    <property type="component" value="Segment"/>
</dbReference>
<organismHost>
    <name type="scientific">Homo sapiens</name>
    <name type="common">Human</name>
    <dbReference type="NCBI Taxonomy" id="9606"/>
</organismHost>
<sequence length="88" mass="9886">MFNFCSMTSLSAVSVHIRNSPSQNTESSIIIANRLLDLAVCIIFNMFNISFRFPFTGIDRSIFSASEMEMLKLQKCVMLARPNIGTCL</sequence>